<gene>
    <name evidence="8" type="primary">Clcn6</name>
    <name type="synonym">Clc6</name>
</gene>
<name>CLCN6_MOUSE</name>
<comment type="function">
    <text evidence="5">Voltage-gated channel mediating the exchange of chloride ions against protons. Functions as antiporter and contributes to the acidification of the late endosome lumen. The CLC channel family contains both chloride channels and proton-coupled anion transporters that exchange chloride or another anion for protons. The presence of conserved gating glutamate residues is typical for family members that function as antiporters.</text>
</comment>
<comment type="catalytic activity">
    <reaction evidence="2">
        <text>2 chloride(in) + H(+)(out) = 2 chloride(out) + H(+)(in)</text>
        <dbReference type="Rhea" id="RHEA:29567"/>
        <dbReference type="ChEBI" id="CHEBI:15378"/>
        <dbReference type="ChEBI" id="CHEBI:17996"/>
    </reaction>
    <physiologicalReaction direction="left-to-right" evidence="2">
        <dbReference type="Rhea" id="RHEA:29568"/>
    </physiologicalReaction>
</comment>
<comment type="subcellular location">
    <subcellularLocation>
        <location evidence="5">Late endosome membrane</location>
        <topology evidence="5">Multi-pass membrane protein</topology>
    </subcellularLocation>
</comment>
<comment type="alternative products">
    <event type="alternative splicing"/>
    <isoform>
        <id>O35454-1</id>
        <name>ClC-6a</name>
        <sequence type="displayed"/>
    </isoform>
    <isoform>
        <id>O35454-2</id>
        <name>ClC-6c</name>
        <sequence type="not described"/>
    </isoform>
</comment>
<comment type="tissue specificity">
    <text evidence="5 6">Detected in whole brain and in hippocampus neurons (at protein level). Detected in brain, trigeminus, dorsal root ganglion, spinal cord, eye, kidney, testis, skeletal muscle, thymus and pancreas. Isoform ClC-6c is expressed only in kidney.</text>
</comment>
<comment type="PTM">
    <text evidence="2">N-glycosylated on several asparagine residues.</text>
</comment>
<comment type="disruption phenotype">
    <text evidence="5">Reduced pain sensitivity and moderate behavioral abnormalities, but have normal fertility and are generally not very different from wild-type.</text>
</comment>
<comment type="similarity">
    <text evidence="7">Belongs to the chloride channel (TC 2.A.49) family. ClC-6/CLCN6 subfamily.</text>
</comment>
<accession>O35454</accession>
<dbReference type="EMBL" id="AF030106">
    <property type="protein sequence ID" value="AAC17702.1"/>
    <property type="molecule type" value="Genomic_DNA"/>
</dbReference>
<dbReference type="EMBL" id="AF030101">
    <property type="protein sequence ID" value="AAC17702.1"/>
    <property type="status" value="JOINED"/>
    <property type="molecule type" value="Genomic_DNA"/>
</dbReference>
<dbReference type="EMBL" id="AF030102">
    <property type="protein sequence ID" value="AAC17702.1"/>
    <property type="status" value="JOINED"/>
    <property type="molecule type" value="Genomic_DNA"/>
</dbReference>
<dbReference type="EMBL" id="AF030103">
    <property type="protein sequence ID" value="AAC17702.1"/>
    <property type="status" value="JOINED"/>
    <property type="molecule type" value="Genomic_DNA"/>
</dbReference>
<dbReference type="EMBL" id="AF030104">
    <property type="protein sequence ID" value="AAC17702.1"/>
    <property type="status" value="JOINED"/>
    <property type="molecule type" value="Genomic_DNA"/>
</dbReference>
<dbReference type="EMBL" id="AF030105">
    <property type="protein sequence ID" value="AAC17702.1"/>
    <property type="status" value="JOINED"/>
    <property type="molecule type" value="Genomic_DNA"/>
</dbReference>
<dbReference type="CCDS" id="CCDS18928.1">
    <molecule id="O35454-1"/>
</dbReference>
<dbReference type="RefSeq" id="NP_036059.1">
    <molecule id="O35454-1"/>
    <property type="nucleotide sequence ID" value="NM_011929.3"/>
</dbReference>
<dbReference type="SMR" id="O35454"/>
<dbReference type="BioGRID" id="204932">
    <property type="interactions" value="11"/>
</dbReference>
<dbReference type="FunCoup" id="O35454">
    <property type="interactions" value="2031"/>
</dbReference>
<dbReference type="STRING" id="10090.ENSMUSP00000030879"/>
<dbReference type="ChEMBL" id="CHEMBL2176794"/>
<dbReference type="TCDB" id="2.A.49.3.4">
    <property type="family name" value="the chloride carrier/channel (clc) family"/>
</dbReference>
<dbReference type="GlyCosmos" id="O35454">
    <property type="glycosylation" value="3 sites, No reported glycans"/>
</dbReference>
<dbReference type="GlyGen" id="O35454">
    <property type="glycosylation" value="4 sites, 1 N-linked glycan (1 site)"/>
</dbReference>
<dbReference type="iPTMnet" id="O35454"/>
<dbReference type="PhosphoSitePlus" id="O35454"/>
<dbReference type="SwissPalm" id="O35454"/>
<dbReference type="PaxDb" id="10090-ENSMUSP00000121751"/>
<dbReference type="ProteomicsDB" id="283377">
    <molecule id="O35454-1"/>
</dbReference>
<dbReference type="Pumba" id="O35454"/>
<dbReference type="Antibodypedia" id="28262">
    <property type="antibodies" value="102 antibodies from 21 providers"/>
</dbReference>
<dbReference type="DNASU" id="26372"/>
<dbReference type="Ensembl" id="ENSMUST00000030879.12">
    <molecule id="O35454-1"/>
    <property type="protein sequence ID" value="ENSMUSP00000030879.6"/>
    <property type="gene ID" value="ENSMUSG00000029016.14"/>
</dbReference>
<dbReference type="GeneID" id="26372"/>
<dbReference type="KEGG" id="mmu:26372"/>
<dbReference type="UCSC" id="uc008vtr.1">
    <molecule id="O35454-1"/>
    <property type="organism name" value="mouse"/>
</dbReference>
<dbReference type="AGR" id="MGI:1347049"/>
<dbReference type="CTD" id="1185"/>
<dbReference type="MGI" id="MGI:1347049">
    <property type="gene designation" value="Clcn6"/>
</dbReference>
<dbReference type="VEuPathDB" id="HostDB:ENSMUSG00000029016"/>
<dbReference type="eggNOG" id="KOG0474">
    <property type="taxonomic scope" value="Eukaryota"/>
</dbReference>
<dbReference type="GeneTree" id="ENSGT00940000159291"/>
<dbReference type="InParanoid" id="O35454"/>
<dbReference type="OrthoDB" id="49576at9989"/>
<dbReference type="Reactome" id="R-MMU-2672351">
    <property type="pathway name" value="Stimuli-sensing channels"/>
</dbReference>
<dbReference type="BioGRID-ORCS" id="26372">
    <property type="hits" value="3 hits in 76 CRISPR screens"/>
</dbReference>
<dbReference type="CD-CODE" id="CE726F99">
    <property type="entry name" value="Postsynaptic density"/>
</dbReference>
<dbReference type="ChiTaRS" id="Clcn6">
    <property type="organism name" value="mouse"/>
</dbReference>
<dbReference type="PRO" id="PR:O35454"/>
<dbReference type="Proteomes" id="UP000000589">
    <property type="component" value="Chromosome 4"/>
</dbReference>
<dbReference type="RNAct" id="O35454">
    <property type="molecule type" value="protein"/>
</dbReference>
<dbReference type="Bgee" id="ENSMUSG00000029016">
    <property type="expression patterns" value="Expressed in substantia nigra and 224 other cell types or tissues"/>
</dbReference>
<dbReference type="ExpressionAtlas" id="O35454">
    <property type="expression patterns" value="baseline and differential"/>
</dbReference>
<dbReference type="GO" id="GO:0031902">
    <property type="term" value="C:late endosome membrane"/>
    <property type="evidence" value="ECO:0007669"/>
    <property type="project" value="UniProtKB-SubCell"/>
</dbReference>
<dbReference type="GO" id="GO:0015297">
    <property type="term" value="F:antiporter activity"/>
    <property type="evidence" value="ECO:0007669"/>
    <property type="project" value="UniProtKB-KW"/>
</dbReference>
<dbReference type="GO" id="GO:0005524">
    <property type="term" value="F:ATP binding"/>
    <property type="evidence" value="ECO:0007669"/>
    <property type="project" value="UniProtKB-KW"/>
</dbReference>
<dbReference type="GO" id="GO:0005247">
    <property type="term" value="F:voltage-gated chloride channel activity"/>
    <property type="evidence" value="ECO:0000250"/>
    <property type="project" value="UniProtKB"/>
</dbReference>
<dbReference type="GO" id="GO:0006821">
    <property type="term" value="P:chloride transport"/>
    <property type="evidence" value="ECO:0000250"/>
    <property type="project" value="UniProtKB"/>
</dbReference>
<dbReference type="CDD" id="cd04591">
    <property type="entry name" value="CBS_pair_voltage-gated_CLC_euk_bac"/>
    <property type="match status" value="1"/>
</dbReference>
<dbReference type="CDD" id="cd03685">
    <property type="entry name" value="ClC_6_like"/>
    <property type="match status" value="1"/>
</dbReference>
<dbReference type="FunFam" id="3.10.580.10:FF:000010">
    <property type="entry name" value="Chloride voltage-gated channel 6"/>
    <property type="match status" value="1"/>
</dbReference>
<dbReference type="Gene3D" id="3.10.580.10">
    <property type="entry name" value="CBS-domain"/>
    <property type="match status" value="1"/>
</dbReference>
<dbReference type="Gene3D" id="1.10.3080.10">
    <property type="entry name" value="Clc chloride channel"/>
    <property type="match status" value="1"/>
</dbReference>
<dbReference type="InterPro" id="IPR000644">
    <property type="entry name" value="CBS_dom"/>
</dbReference>
<dbReference type="InterPro" id="IPR046342">
    <property type="entry name" value="CBS_dom_sf"/>
</dbReference>
<dbReference type="InterPro" id="IPR051280">
    <property type="entry name" value="Cl-channel/antiporter"/>
</dbReference>
<dbReference type="InterPro" id="IPR014743">
    <property type="entry name" value="Cl-channel_core"/>
</dbReference>
<dbReference type="InterPro" id="IPR002248">
    <property type="entry name" value="Cl_channel-6"/>
</dbReference>
<dbReference type="InterPro" id="IPR001807">
    <property type="entry name" value="ClC"/>
</dbReference>
<dbReference type="PANTHER" id="PTHR11689">
    <property type="entry name" value="CHLORIDE CHANNEL PROTEIN CLC FAMILY MEMBER"/>
    <property type="match status" value="1"/>
</dbReference>
<dbReference type="PANTHER" id="PTHR11689:SF158">
    <property type="entry name" value="H(+)_CL(-) EXCHANGE TRANSPORTER 6"/>
    <property type="match status" value="1"/>
</dbReference>
<dbReference type="Pfam" id="PF00571">
    <property type="entry name" value="CBS"/>
    <property type="match status" value="2"/>
</dbReference>
<dbReference type="Pfam" id="PF00654">
    <property type="entry name" value="Voltage_CLC"/>
    <property type="match status" value="1"/>
</dbReference>
<dbReference type="PRINTS" id="PR00762">
    <property type="entry name" value="CLCHANNEL"/>
</dbReference>
<dbReference type="PRINTS" id="PR01117">
    <property type="entry name" value="CLCHANNEL6"/>
</dbReference>
<dbReference type="SMART" id="SM00116">
    <property type="entry name" value="CBS"/>
    <property type="match status" value="2"/>
</dbReference>
<dbReference type="SUPFAM" id="SSF54631">
    <property type="entry name" value="CBS-domain pair"/>
    <property type="match status" value="1"/>
</dbReference>
<dbReference type="SUPFAM" id="SSF81340">
    <property type="entry name" value="Clc chloride channel"/>
    <property type="match status" value="1"/>
</dbReference>
<dbReference type="PROSITE" id="PS51371">
    <property type="entry name" value="CBS"/>
    <property type="match status" value="2"/>
</dbReference>
<reference key="1">
    <citation type="submission" date="1997-10" db="EMBL/GenBank/DDBJ databases">
        <authorList>
            <person name="Kornak U."/>
            <person name="Boesl M.R."/>
            <person name="Jentsch T.J."/>
        </authorList>
    </citation>
    <scope>NUCLEOTIDE SEQUENCE [GENOMIC DNA]</scope>
</reference>
<reference key="2">
    <citation type="journal article" date="1997" name="Biochem. J.">
        <title>Alternative splicing of ClC-6 (a member of the ClC chloride-channel family) transcripts generates three truncated isoforms one of which, ClC-6c, is kidney-specific.</title>
        <authorList>
            <person name="Eggermont J."/>
            <person name="Buyse G."/>
            <person name="Voets T."/>
            <person name="Tytgat J."/>
            <person name="De Smedt H."/>
            <person name="Droogmans G."/>
            <person name="Nilius B."/>
        </authorList>
    </citation>
    <scope>TISSUE SPECIFICITY</scope>
    <scope>ALTERNATIVE SPLICING</scope>
    <source>
        <tissue>Chronic myeloid leukemia cell</tissue>
    </source>
</reference>
<reference key="3">
    <citation type="journal article" date="2006" name="Proc. Natl. Acad. Sci. U.S.A.">
        <title>Lysosomal storage disease upon disruption of the neuronal chloride transport protein ClC-6.</title>
        <authorList>
            <person name="Poet M."/>
            <person name="Kornak U."/>
            <person name="Schweizer M."/>
            <person name="Zdebik A.A."/>
            <person name="Scheel O."/>
            <person name="Hoelter S."/>
            <person name="Wurst W."/>
            <person name="Schmitt A."/>
            <person name="Fuhrmann J.C."/>
            <person name="Planells-Cases R."/>
            <person name="Mole S.E."/>
            <person name="Huebner C.A."/>
            <person name="Jentsch T.J."/>
        </authorList>
    </citation>
    <scope>FUNCTION</scope>
    <scope>SUBCELLULAR LOCATION</scope>
    <scope>DISRUPTION PHENOTYPE</scope>
    <scope>TISSUE SPECIFICITY</scope>
</reference>
<reference key="4">
    <citation type="journal article" date="2010" name="Cell">
        <title>A tissue-specific atlas of mouse protein phosphorylation and expression.</title>
        <authorList>
            <person name="Huttlin E.L."/>
            <person name="Jedrychowski M.P."/>
            <person name="Elias J.E."/>
            <person name="Goswami T."/>
            <person name="Rad R."/>
            <person name="Beausoleil S.A."/>
            <person name="Villen J."/>
            <person name="Haas W."/>
            <person name="Sowa M.E."/>
            <person name="Gygi S.P."/>
        </authorList>
    </citation>
    <scope>PHOSPHORYLATION [LARGE SCALE ANALYSIS] AT SER-774</scope>
    <scope>IDENTIFICATION BY MASS SPECTROMETRY [LARGE SCALE ANALYSIS]</scope>
    <source>
        <tissue>Brain</tissue>
    </source>
</reference>
<proteinExistence type="evidence at protein level"/>
<keyword id="KW-0025">Alternative splicing</keyword>
<keyword id="KW-0050">Antiport</keyword>
<keyword id="KW-0067">ATP-binding</keyword>
<keyword id="KW-0129">CBS domain</keyword>
<keyword id="KW-0868">Chloride</keyword>
<keyword id="KW-0967">Endosome</keyword>
<keyword id="KW-0325">Glycoprotein</keyword>
<keyword id="KW-0406">Ion transport</keyword>
<keyword id="KW-0472">Membrane</keyword>
<keyword id="KW-0547">Nucleotide-binding</keyword>
<keyword id="KW-0597">Phosphoprotein</keyword>
<keyword id="KW-1185">Reference proteome</keyword>
<keyword id="KW-0677">Repeat</keyword>
<keyword id="KW-0812">Transmembrane</keyword>
<keyword id="KW-1133">Transmembrane helix</keyword>
<keyword id="KW-0813">Transport</keyword>
<sequence>MAGCRGSVCCCCRWCCCCGERESRTPEELTILGETQEEEDEILPRKDYESLDYDRCINDPYLEVLETMDNKKGRRYEAVKWMVVFAIGVCTGLVGLFVDFSVRLFTQLKFGVVQTSVEECSQKGCLALSLLELLGFNLTFVFLASLLVLIEPVAAGSGIPEIKCYLNGVKVPGIVRLRTLLCKVFGVLFSVSGGLFVGKEGPMIHSGAVVGAGLPQFQSISLRKIQFNFPYFRSDRDKRDFVSAGAAAGVAAAFGAPIGGTLFSLEEGSSFWNQGLTWKVLFCSMSATFTLNFFRSGIQFGSWGSFQLPGLLNFGEFKCSDSDKKCHLWTAMDLGFFVVMGVIGGLLGATFNCLNKRLAKYRMRNVHPKPKLVRVLESLLVSLVTTVVVFVASMVLGECRQMSSTSQTGNGSFQLQVTSEDVNSTIKAFFCPNDTYNDMATLFFNSQESAILQLFHQDGTFSPVTLALFFILYFLLACWTFGTSVPSGLFVPSLLCGAAFGRLVANVLKSYIGLGHLYSGTFALIGAAAFLGGVVRMTISLTVILIESTNEITYGLPIMVTLMVAKWTGDLFNKGIYDVHIGLRGVPLLEWETDVEMDKLRASDIMEPNLTYVYPHTRIQSLVSILRTTVHHAFPVVTENRGNEKEFMKGNQLISNNIKFKKSSILTRAGEQRKRGQSMKSYPSSELRNVCDEHVASEEPAEKEDLLQQMLERRYTPYPNLYPDQSPSEDWTMEERFRPLTFHGLVLRSQLVTLLVRGVCYSESQSSASQPRLSYAEMAEDYPRYPDIHDLDLTLLNPRMIVDVTPYMNPSPFTVSPNTHVSQVFNLFRTMGLRHLPVVNAVGEIVGIITRHNLTNEFLQARLRQHYQTL</sequence>
<organism>
    <name type="scientific">Mus musculus</name>
    <name type="common">Mouse</name>
    <dbReference type="NCBI Taxonomy" id="10090"/>
    <lineage>
        <taxon>Eukaryota</taxon>
        <taxon>Metazoa</taxon>
        <taxon>Chordata</taxon>
        <taxon>Craniata</taxon>
        <taxon>Vertebrata</taxon>
        <taxon>Euteleostomi</taxon>
        <taxon>Mammalia</taxon>
        <taxon>Eutheria</taxon>
        <taxon>Euarchontoglires</taxon>
        <taxon>Glires</taxon>
        <taxon>Rodentia</taxon>
        <taxon>Myomorpha</taxon>
        <taxon>Muroidea</taxon>
        <taxon>Muridae</taxon>
        <taxon>Murinae</taxon>
        <taxon>Mus</taxon>
        <taxon>Mus</taxon>
    </lineage>
</organism>
<protein>
    <recommendedName>
        <fullName>H(+)/Cl(-) exchange transporter 6</fullName>
    </recommendedName>
    <alternativeName>
        <fullName>Chloride channel protein 6</fullName>
        <shortName>ClC-6</shortName>
    </alternativeName>
    <alternativeName>
        <fullName>Chloride transport protein 6</fullName>
    </alternativeName>
</protein>
<evidence type="ECO:0000250" key="1"/>
<evidence type="ECO:0000250" key="2">
    <source>
        <dbReference type="UniProtKB" id="P51797"/>
    </source>
</evidence>
<evidence type="ECO:0000255" key="3"/>
<evidence type="ECO:0000255" key="4">
    <source>
        <dbReference type="PROSITE-ProRule" id="PRU00703"/>
    </source>
</evidence>
<evidence type="ECO:0000269" key="5">
    <source>
    </source>
</evidence>
<evidence type="ECO:0000269" key="6">
    <source>
    </source>
</evidence>
<evidence type="ECO:0000305" key="7"/>
<evidence type="ECO:0000312" key="8">
    <source>
        <dbReference type="MGI" id="MGI:1347049"/>
    </source>
</evidence>
<evidence type="ECO:0007744" key="9">
    <source>
    </source>
</evidence>
<feature type="chain" id="PRO_0000094450" description="H(+)/Cl(-) exchange transporter 6">
    <location>
        <begin position="1"/>
        <end position="870"/>
    </location>
</feature>
<feature type="topological domain" description="Cytoplasmic" evidence="1">
    <location>
        <begin position="1"/>
        <end position="80"/>
    </location>
</feature>
<feature type="transmembrane region" description="Helical" evidence="1">
    <location>
        <begin position="81"/>
        <end position="113"/>
    </location>
</feature>
<feature type="transmembrane region" description="Helical" evidence="1">
    <location>
        <begin position="128"/>
        <end position="150"/>
    </location>
</feature>
<feature type="intramembrane region" description="Helical" evidence="1">
    <location>
        <begin position="159"/>
        <end position="166"/>
    </location>
</feature>
<feature type="transmembrane region" description="Helical" evidence="1">
    <location>
        <begin position="176"/>
        <end position="194"/>
    </location>
</feature>
<feature type="transmembrane region" description="Helical" evidence="1">
    <location>
        <begin position="200"/>
        <end position="217"/>
    </location>
</feature>
<feature type="intramembrane region" description="Helical" evidence="1">
    <location>
        <begin position="241"/>
        <end position="253"/>
    </location>
</feature>
<feature type="intramembrane region" description="Helical" evidence="1">
    <location>
        <begin position="257"/>
        <end position="265"/>
    </location>
</feature>
<feature type="transmembrane region" description="Helical" evidence="1">
    <location>
        <begin position="277"/>
        <end position="294"/>
    </location>
</feature>
<feature type="transmembrane region" description="Helical" evidence="1">
    <location>
        <begin position="335"/>
        <end position="364"/>
    </location>
</feature>
<feature type="transmembrane region" description="Helical" evidence="1">
    <location>
        <begin position="371"/>
        <end position="392"/>
    </location>
</feature>
<feature type="transmembrane region" description="Helical" evidence="1">
    <location>
        <begin position="463"/>
        <end position="482"/>
    </location>
</feature>
<feature type="transmembrane region" description="Helical" evidence="1">
    <location>
        <begin position="488"/>
        <end position="512"/>
    </location>
</feature>
<feature type="intramembrane region" description="Helical" evidence="1">
    <location>
        <begin position="520"/>
        <end position="534"/>
    </location>
</feature>
<feature type="intramembrane region" description="Note=Loop between two helices" evidence="1">
    <location>
        <begin position="535"/>
        <end position="537"/>
    </location>
</feature>
<feature type="intramembrane region" description="Helical" evidence="1">
    <location>
        <begin position="538"/>
        <end position="549"/>
    </location>
</feature>
<feature type="intramembrane region" description="Note=Loop between two helices" evidence="1">
    <location>
        <begin position="550"/>
        <end position="553"/>
    </location>
</feature>
<feature type="transmembrane region" description="Helical" evidence="1">
    <location>
        <begin position="554"/>
        <end position="572"/>
    </location>
</feature>
<feature type="topological domain" description="Cytoplasmic" evidence="1">
    <location>
        <begin position="573"/>
        <end position="870"/>
    </location>
</feature>
<feature type="domain" description="CBS 1" evidence="4">
    <location>
        <begin position="606"/>
        <end position="663"/>
    </location>
</feature>
<feature type="domain" description="CBS 2" evidence="4">
    <location>
        <begin position="808"/>
        <end position="869"/>
    </location>
</feature>
<feature type="short sequence motif" description="Selectivity filter part_1" evidence="1">
    <location>
        <begin position="156"/>
        <end position="160"/>
    </location>
</feature>
<feature type="short sequence motif" description="Selectivity filter part_2" evidence="1">
    <location>
        <begin position="198"/>
        <end position="202"/>
    </location>
</feature>
<feature type="short sequence motif" description="Selectivity filter part_3" evidence="1">
    <location>
        <begin position="488"/>
        <end position="492"/>
    </location>
</feature>
<feature type="binding site" evidence="1">
    <location>
        <position position="157"/>
    </location>
    <ligand>
        <name>chloride</name>
        <dbReference type="ChEBI" id="CHEBI:17996"/>
    </ligand>
</feature>
<feature type="binding site" evidence="1">
    <location>
        <position position="490"/>
    </location>
    <ligand>
        <name>chloride</name>
        <dbReference type="ChEBI" id="CHEBI:17996"/>
    </ligand>
</feature>
<feature type="binding site" evidence="1">
    <location>
        <position position="577"/>
    </location>
    <ligand>
        <name>chloride</name>
        <dbReference type="ChEBI" id="CHEBI:17996"/>
    </ligand>
</feature>
<feature type="binding site" evidence="1">
    <location>
        <begin position="631"/>
        <end position="633"/>
    </location>
    <ligand>
        <name>ATP</name>
        <dbReference type="ChEBI" id="CHEBI:30616"/>
    </ligand>
</feature>
<feature type="binding site" evidence="1">
    <location>
        <begin position="850"/>
        <end position="853"/>
    </location>
    <ligand>
        <name>ATP</name>
        <dbReference type="ChEBI" id="CHEBI:30616"/>
    </ligand>
</feature>
<feature type="site" description="Mediates proton transfer from the outer aqueous phase to the interior of the protein; involved in linking H(+) and Cl(-) transport" evidence="1">
    <location>
        <position position="200"/>
    </location>
</feature>
<feature type="site" description="Mediates proton transfer from the protein to the inner aqueous phase" evidence="1">
    <location>
        <position position="267"/>
    </location>
</feature>
<feature type="modified residue" description="Phosphoserine" evidence="9">
    <location>
        <position position="774"/>
    </location>
</feature>
<feature type="glycosylation site" description="N-linked (GlcNAc...) asparagine" evidence="3">
    <location>
        <position position="410"/>
    </location>
</feature>
<feature type="glycosylation site" description="N-linked (GlcNAc...) asparagine" evidence="3">
    <location>
        <position position="423"/>
    </location>
</feature>
<feature type="glycosylation site" description="N-linked (GlcNAc...) asparagine" evidence="3">
    <location>
        <position position="433"/>
    </location>
</feature>